<dbReference type="EMBL" id="AE000666">
    <property type="protein sequence ID" value="AAB86178.1"/>
    <property type="molecule type" value="Genomic_DNA"/>
</dbReference>
<dbReference type="PIR" id="C69095">
    <property type="entry name" value="C69095"/>
</dbReference>
<dbReference type="RefSeq" id="WP_010877314.1">
    <property type="nucleotide sequence ID" value="NC_000916.1"/>
</dbReference>
<dbReference type="SMR" id="O27741"/>
<dbReference type="STRING" id="187420.MTH_1706"/>
<dbReference type="PaxDb" id="187420-MTH_1706"/>
<dbReference type="EnsemblBacteria" id="AAB86178">
    <property type="protein sequence ID" value="AAB86178"/>
    <property type="gene ID" value="MTH_1706"/>
</dbReference>
<dbReference type="GeneID" id="1470791"/>
<dbReference type="KEGG" id="mth:MTH_1706"/>
<dbReference type="PATRIC" id="fig|187420.15.peg.1667"/>
<dbReference type="HOGENOM" id="CLU_137910_1_0_2"/>
<dbReference type="InParanoid" id="O27741"/>
<dbReference type="Proteomes" id="UP000005223">
    <property type="component" value="Chromosome"/>
</dbReference>
<dbReference type="GO" id="GO:0005886">
    <property type="term" value="C:plasma membrane"/>
    <property type="evidence" value="ECO:0007669"/>
    <property type="project" value="UniProtKB-SubCell"/>
</dbReference>
<dbReference type="InterPro" id="IPR025937">
    <property type="entry name" value="PDGLE_dom"/>
</dbReference>
<dbReference type="NCBIfam" id="NF004932">
    <property type="entry name" value="PRK06287.1-3"/>
    <property type="match status" value="1"/>
</dbReference>
<dbReference type="Pfam" id="PF13190">
    <property type="entry name" value="PDGLE"/>
    <property type="match status" value="1"/>
</dbReference>
<proteinExistence type="predicted"/>
<feature type="chain" id="PRO_0000107418" description="Uncharacterized protein MTH_1706">
    <location>
        <begin position="1"/>
        <end position="105"/>
    </location>
</feature>
<feature type="transmembrane region" description="Helical" evidence="1">
    <location>
        <begin position="8"/>
        <end position="28"/>
    </location>
</feature>
<feature type="transmembrane region" description="Helical" evidence="1">
    <location>
        <begin position="72"/>
        <end position="92"/>
    </location>
</feature>
<feature type="region of interest" description="Disordered" evidence="2">
    <location>
        <begin position="32"/>
        <end position="53"/>
    </location>
</feature>
<evidence type="ECO:0000255" key="1"/>
<evidence type="ECO:0000256" key="2">
    <source>
        <dbReference type="SAM" id="MobiDB-lite"/>
    </source>
</evidence>
<evidence type="ECO:0000305" key="3"/>
<sequence>MNARDKKFMTAGIIIALIIAVLAPFLASPNPDGLESTAEKVMPNPETEPVLESPLPDYTLPALGDSPFGGVVSMVIGTILVLAIAYGVGAVFRGRKAAGEEGGEE</sequence>
<name>Y1706_METTH</name>
<comment type="subcellular location">
    <subcellularLocation>
        <location evidence="3">Cell membrane</location>
        <topology evidence="3">Multi-pass membrane protein</topology>
    </subcellularLocation>
</comment>
<comment type="similarity">
    <text evidence="3">To M.jannaschii MJ1570.</text>
</comment>
<protein>
    <recommendedName>
        <fullName>Uncharacterized protein MTH_1706</fullName>
    </recommendedName>
</protein>
<organism>
    <name type="scientific">Methanothermobacter thermautotrophicus (strain ATCC 29096 / DSM 1053 / JCM 10044 / NBRC 100330 / Delta H)</name>
    <name type="common">Methanobacterium thermoautotrophicum</name>
    <dbReference type="NCBI Taxonomy" id="187420"/>
    <lineage>
        <taxon>Archaea</taxon>
        <taxon>Methanobacteriati</taxon>
        <taxon>Methanobacteriota</taxon>
        <taxon>Methanomada group</taxon>
        <taxon>Methanobacteria</taxon>
        <taxon>Methanobacteriales</taxon>
        <taxon>Methanobacteriaceae</taxon>
        <taxon>Methanothermobacter</taxon>
    </lineage>
</organism>
<accession>O27741</accession>
<reference key="1">
    <citation type="journal article" date="1997" name="J. Bacteriol.">
        <title>Complete genome sequence of Methanobacterium thermoautotrophicum deltaH: functional analysis and comparative genomics.</title>
        <authorList>
            <person name="Smith D.R."/>
            <person name="Doucette-Stamm L.A."/>
            <person name="Deloughery C."/>
            <person name="Lee H.-M."/>
            <person name="Dubois J."/>
            <person name="Aldredge T."/>
            <person name="Bashirzadeh R."/>
            <person name="Blakely D."/>
            <person name="Cook R."/>
            <person name="Gilbert K."/>
            <person name="Harrison D."/>
            <person name="Hoang L."/>
            <person name="Keagle P."/>
            <person name="Lumm W."/>
            <person name="Pothier B."/>
            <person name="Qiu D."/>
            <person name="Spadafora R."/>
            <person name="Vicare R."/>
            <person name="Wang Y."/>
            <person name="Wierzbowski J."/>
            <person name="Gibson R."/>
            <person name="Jiwani N."/>
            <person name="Caruso A."/>
            <person name="Bush D."/>
            <person name="Safer H."/>
            <person name="Patwell D."/>
            <person name="Prabhakar S."/>
            <person name="McDougall S."/>
            <person name="Shimer G."/>
            <person name="Goyal A."/>
            <person name="Pietrovski S."/>
            <person name="Church G.M."/>
            <person name="Daniels C.J."/>
            <person name="Mao J.-I."/>
            <person name="Rice P."/>
            <person name="Noelling J."/>
            <person name="Reeve J.N."/>
        </authorList>
    </citation>
    <scope>NUCLEOTIDE SEQUENCE [LARGE SCALE GENOMIC DNA]</scope>
    <source>
        <strain>ATCC 29096 / DSM 1053 / JCM 10044 / NBRC 100330 / Delta H</strain>
    </source>
</reference>
<gene>
    <name type="ordered locus">MTH_1706</name>
</gene>
<keyword id="KW-1003">Cell membrane</keyword>
<keyword id="KW-0472">Membrane</keyword>
<keyword id="KW-1185">Reference proteome</keyword>
<keyword id="KW-0812">Transmembrane</keyword>
<keyword id="KW-1133">Transmembrane helix</keyword>